<dbReference type="EC" id="7.1.1.-" evidence="1"/>
<dbReference type="EMBL" id="CP001191">
    <property type="protein sequence ID" value="ACI54565.1"/>
    <property type="molecule type" value="Genomic_DNA"/>
</dbReference>
<dbReference type="RefSeq" id="WP_003587269.1">
    <property type="nucleotide sequence ID" value="NC_011369.1"/>
</dbReference>
<dbReference type="SMR" id="B5ZYM4"/>
<dbReference type="STRING" id="395492.Rleg2_1271"/>
<dbReference type="GeneID" id="91148066"/>
<dbReference type="KEGG" id="rlt:Rleg2_1271"/>
<dbReference type="eggNOG" id="COG0713">
    <property type="taxonomic scope" value="Bacteria"/>
</dbReference>
<dbReference type="HOGENOM" id="CLU_144724_2_0_5"/>
<dbReference type="Proteomes" id="UP000008330">
    <property type="component" value="Chromosome"/>
</dbReference>
<dbReference type="GO" id="GO:0030964">
    <property type="term" value="C:NADH dehydrogenase complex"/>
    <property type="evidence" value="ECO:0007669"/>
    <property type="project" value="TreeGrafter"/>
</dbReference>
<dbReference type="GO" id="GO:0005886">
    <property type="term" value="C:plasma membrane"/>
    <property type="evidence" value="ECO:0007669"/>
    <property type="project" value="UniProtKB-SubCell"/>
</dbReference>
<dbReference type="GO" id="GO:0050136">
    <property type="term" value="F:NADH:ubiquinone reductase (non-electrogenic) activity"/>
    <property type="evidence" value="ECO:0007669"/>
    <property type="project" value="UniProtKB-UniRule"/>
</dbReference>
<dbReference type="GO" id="GO:0048038">
    <property type="term" value="F:quinone binding"/>
    <property type="evidence" value="ECO:0007669"/>
    <property type="project" value="UniProtKB-KW"/>
</dbReference>
<dbReference type="GO" id="GO:0042773">
    <property type="term" value="P:ATP synthesis coupled electron transport"/>
    <property type="evidence" value="ECO:0007669"/>
    <property type="project" value="InterPro"/>
</dbReference>
<dbReference type="FunFam" id="1.10.287.3510:FF:000001">
    <property type="entry name" value="NADH-quinone oxidoreductase subunit K"/>
    <property type="match status" value="1"/>
</dbReference>
<dbReference type="Gene3D" id="1.10.287.3510">
    <property type="match status" value="1"/>
</dbReference>
<dbReference type="HAMAP" id="MF_01456">
    <property type="entry name" value="NDH1_NuoK"/>
    <property type="match status" value="1"/>
</dbReference>
<dbReference type="InterPro" id="IPR001133">
    <property type="entry name" value="NADH_UbQ_OxRdtase_chain4L/K"/>
</dbReference>
<dbReference type="InterPro" id="IPR039428">
    <property type="entry name" value="NUOK/Mnh_C1-like"/>
</dbReference>
<dbReference type="NCBIfam" id="NF004320">
    <property type="entry name" value="PRK05715.1-2"/>
    <property type="match status" value="1"/>
</dbReference>
<dbReference type="NCBIfam" id="NF004321">
    <property type="entry name" value="PRK05715.1-3"/>
    <property type="match status" value="1"/>
</dbReference>
<dbReference type="NCBIfam" id="NF004323">
    <property type="entry name" value="PRK05715.1-5"/>
    <property type="match status" value="1"/>
</dbReference>
<dbReference type="PANTHER" id="PTHR11434:SF21">
    <property type="entry name" value="NADH DEHYDROGENASE SUBUNIT 4L-RELATED"/>
    <property type="match status" value="1"/>
</dbReference>
<dbReference type="PANTHER" id="PTHR11434">
    <property type="entry name" value="NADH-UBIQUINONE OXIDOREDUCTASE SUBUNIT ND4L"/>
    <property type="match status" value="1"/>
</dbReference>
<dbReference type="Pfam" id="PF00420">
    <property type="entry name" value="Oxidored_q2"/>
    <property type="match status" value="1"/>
</dbReference>
<organism>
    <name type="scientific">Rhizobium leguminosarum bv. trifolii (strain WSM2304)</name>
    <dbReference type="NCBI Taxonomy" id="395492"/>
    <lineage>
        <taxon>Bacteria</taxon>
        <taxon>Pseudomonadati</taxon>
        <taxon>Pseudomonadota</taxon>
        <taxon>Alphaproteobacteria</taxon>
        <taxon>Hyphomicrobiales</taxon>
        <taxon>Rhizobiaceae</taxon>
        <taxon>Rhizobium/Agrobacterium group</taxon>
        <taxon>Rhizobium</taxon>
    </lineage>
</organism>
<reference key="1">
    <citation type="journal article" date="2010" name="Stand. Genomic Sci.">
        <title>Complete genome sequence of Rhizobium leguminosarum bv trifolii strain WSM2304, an effective microsymbiont of the South American clover Trifolium polymorphum.</title>
        <authorList>
            <person name="Reeve W."/>
            <person name="O'Hara G."/>
            <person name="Chain P."/>
            <person name="Ardley J."/>
            <person name="Brau L."/>
            <person name="Nandesena K."/>
            <person name="Tiwari R."/>
            <person name="Malfatti S."/>
            <person name="Kiss H."/>
            <person name="Lapidus A."/>
            <person name="Copeland A."/>
            <person name="Nolan M."/>
            <person name="Land M."/>
            <person name="Ivanova N."/>
            <person name="Mavromatis K."/>
            <person name="Markowitz V."/>
            <person name="Kyrpides N."/>
            <person name="Melino V."/>
            <person name="Denton M."/>
            <person name="Yates R."/>
            <person name="Howieson J."/>
        </authorList>
    </citation>
    <scope>NUCLEOTIDE SEQUENCE [LARGE SCALE GENOMIC DNA]</scope>
    <source>
        <strain>WSM2304</strain>
    </source>
</reference>
<keyword id="KW-0997">Cell inner membrane</keyword>
<keyword id="KW-1003">Cell membrane</keyword>
<keyword id="KW-0472">Membrane</keyword>
<keyword id="KW-0520">NAD</keyword>
<keyword id="KW-0874">Quinone</keyword>
<keyword id="KW-1185">Reference proteome</keyword>
<keyword id="KW-1278">Translocase</keyword>
<keyword id="KW-0812">Transmembrane</keyword>
<keyword id="KW-1133">Transmembrane helix</keyword>
<keyword id="KW-0813">Transport</keyword>
<keyword id="KW-0830">Ubiquinone</keyword>
<evidence type="ECO:0000255" key="1">
    <source>
        <dbReference type="HAMAP-Rule" id="MF_01456"/>
    </source>
</evidence>
<accession>B5ZYM4</accession>
<protein>
    <recommendedName>
        <fullName evidence="1">NADH-quinone oxidoreductase subunit K</fullName>
        <ecNumber evidence="1">7.1.1.-</ecNumber>
    </recommendedName>
    <alternativeName>
        <fullName evidence="1">NADH dehydrogenase I subunit K</fullName>
    </alternativeName>
    <alternativeName>
        <fullName evidence="1">NDH-1 subunit K</fullName>
    </alternativeName>
</protein>
<comment type="function">
    <text evidence="1">NDH-1 shuttles electrons from NADH, via FMN and iron-sulfur (Fe-S) centers, to quinones in the respiratory chain. The immediate electron acceptor for the enzyme in this species is believed to be ubiquinone. Couples the redox reaction to proton translocation (for every two electrons transferred, four hydrogen ions are translocated across the cytoplasmic membrane), and thus conserves the redox energy in a proton gradient.</text>
</comment>
<comment type="catalytic activity">
    <reaction evidence="1">
        <text>a quinone + NADH + 5 H(+)(in) = a quinol + NAD(+) + 4 H(+)(out)</text>
        <dbReference type="Rhea" id="RHEA:57888"/>
        <dbReference type="ChEBI" id="CHEBI:15378"/>
        <dbReference type="ChEBI" id="CHEBI:24646"/>
        <dbReference type="ChEBI" id="CHEBI:57540"/>
        <dbReference type="ChEBI" id="CHEBI:57945"/>
        <dbReference type="ChEBI" id="CHEBI:132124"/>
    </reaction>
</comment>
<comment type="subunit">
    <text evidence="1">NDH-1 is composed of 14 different subunits. Subunits NuoA, H, J, K, L, M, N constitute the membrane sector of the complex.</text>
</comment>
<comment type="subcellular location">
    <subcellularLocation>
        <location evidence="1">Cell inner membrane</location>
        <topology evidence="1">Multi-pass membrane protein</topology>
    </subcellularLocation>
</comment>
<comment type="similarity">
    <text evidence="1">Belongs to the complex I subunit 4L family.</text>
</comment>
<proteinExistence type="inferred from homology"/>
<sequence length="102" mass="11020">MVIGLSHYLTVSAILFTLGVFGIFLNRKNVIVILMSVELILLAVNINMVAFSSFLNDIVGQVFALFILTVAAAEAAIGLAILVVFYRNRGSIAVEDVNMMKG</sequence>
<name>NUOK_RHILW</name>
<feature type="chain" id="PRO_0000390192" description="NADH-quinone oxidoreductase subunit K">
    <location>
        <begin position="1"/>
        <end position="102"/>
    </location>
</feature>
<feature type="transmembrane region" description="Helical" evidence="1">
    <location>
        <begin position="5"/>
        <end position="25"/>
    </location>
</feature>
<feature type="transmembrane region" description="Helical" evidence="1">
    <location>
        <begin position="31"/>
        <end position="51"/>
    </location>
</feature>
<feature type="transmembrane region" description="Helical" evidence="1">
    <location>
        <begin position="65"/>
        <end position="85"/>
    </location>
</feature>
<gene>
    <name evidence="1" type="primary">nuoK</name>
    <name type="ordered locus">Rleg2_1271</name>
</gene>